<organism>
    <name type="scientific">Pyrococcus furiosus (strain ATCC 43587 / DSM 3638 / JCM 8422 / Vc1)</name>
    <dbReference type="NCBI Taxonomy" id="186497"/>
    <lineage>
        <taxon>Archaea</taxon>
        <taxon>Methanobacteriati</taxon>
        <taxon>Methanobacteriota</taxon>
        <taxon>Thermococci</taxon>
        <taxon>Thermococcales</taxon>
        <taxon>Thermococcaceae</taxon>
        <taxon>Pyrococcus</taxon>
    </lineage>
</organism>
<protein>
    <recommendedName>
        <fullName>Lysyl aminopeptidase</fullName>
        <ecNumber>3.4.11.15</ecNumber>
    </recommendedName>
</protein>
<feature type="chain" id="PRO_0000391011" description="Lysyl aminopeptidase">
    <location>
        <begin position="1"/>
        <end position="346"/>
    </location>
</feature>
<feature type="active site" description="Proton acceptor" evidence="1">
    <location>
        <position position="207"/>
    </location>
</feature>
<feature type="binding site" evidence="1">
    <location>
        <position position="63"/>
    </location>
    <ligand>
        <name>Zn(2+)</name>
        <dbReference type="ChEBI" id="CHEBI:29105"/>
        <label>1</label>
    </ligand>
</feature>
<feature type="binding site" evidence="1">
    <location>
        <position position="177"/>
    </location>
    <ligand>
        <name>Zn(2+)</name>
        <dbReference type="ChEBI" id="CHEBI:29105"/>
        <label>1</label>
    </ligand>
</feature>
<feature type="binding site" evidence="1">
    <location>
        <position position="177"/>
    </location>
    <ligand>
        <name>Zn(2+)</name>
        <dbReference type="ChEBI" id="CHEBI:29105"/>
        <label>2</label>
    </ligand>
</feature>
<feature type="binding site" evidence="1">
    <location>
        <position position="208"/>
    </location>
    <ligand>
        <name>Zn(2+)</name>
        <dbReference type="ChEBI" id="CHEBI:29105"/>
        <label>2</label>
    </ligand>
</feature>
<feature type="binding site" evidence="1">
    <location>
        <position position="230"/>
    </location>
    <ligand>
        <name>Zn(2+)</name>
        <dbReference type="ChEBI" id="CHEBI:29105"/>
        <label>1</label>
    </ligand>
</feature>
<feature type="binding site" evidence="1">
    <location>
        <position position="314"/>
    </location>
    <ligand>
        <name>Zn(2+)</name>
        <dbReference type="ChEBI" id="CHEBI:29105"/>
        <label>2</label>
    </ligand>
</feature>
<feature type="helix" evidence="4">
    <location>
        <begin position="4"/>
        <end position="12"/>
    </location>
</feature>
<feature type="helix" evidence="4">
    <location>
        <begin position="20"/>
        <end position="22"/>
    </location>
</feature>
<feature type="helix" evidence="4">
    <location>
        <begin position="24"/>
        <end position="32"/>
    </location>
</feature>
<feature type="turn" evidence="4">
    <location>
        <begin position="33"/>
        <end position="35"/>
    </location>
</feature>
<feature type="strand" evidence="4">
    <location>
        <begin position="37"/>
        <end position="41"/>
    </location>
</feature>
<feature type="strand" evidence="4">
    <location>
        <begin position="47"/>
        <end position="51"/>
    </location>
</feature>
<feature type="strand" evidence="4">
    <location>
        <begin position="54"/>
        <end position="63"/>
    </location>
</feature>
<feature type="strand" evidence="4">
    <location>
        <begin position="68"/>
        <end position="74"/>
    </location>
</feature>
<feature type="strand" evidence="4">
    <location>
        <begin position="80"/>
        <end position="87"/>
    </location>
</feature>
<feature type="helix" evidence="4">
    <location>
        <begin position="90"/>
        <end position="92"/>
    </location>
</feature>
<feature type="turn" evidence="4">
    <location>
        <begin position="93"/>
        <end position="95"/>
    </location>
</feature>
<feature type="strand" evidence="4">
    <location>
        <begin position="96"/>
        <end position="102"/>
    </location>
</feature>
<feature type="strand" evidence="4">
    <location>
        <begin position="105"/>
        <end position="111"/>
    </location>
</feature>
<feature type="helix" evidence="4">
    <location>
        <begin position="116"/>
        <end position="118"/>
    </location>
</feature>
<feature type="strand" evidence="4">
    <location>
        <begin position="135"/>
        <end position="137"/>
    </location>
</feature>
<feature type="helix" evidence="4">
    <location>
        <begin position="143"/>
        <end position="149"/>
    </location>
</feature>
<feature type="strand" evidence="4">
    <location>
        <begin position="156"/>
        <end position="159"/>
    </location>
</feature>
<feature type="strand" evidence="4">
    <location>
        <begin position="167"/>
        <end position="172"/>
    </location>
</feature>
<feature type="helix" evidence="4">
    <location>
        <begin position="176"/>
        <end position="190"/>
    </location>
</feature>
<feature type="strand" evidence="4">
    <location>
        <begin position="196"/>
        <end position="206"/>
    </location>
</feature>
<feature type="turn" evidence="4">
    <location>
        <begin position="208"/>
        <end position="210"/>
    </location>
</feature>
<feature type="helix" evidence="4">
    <location>
        <begin position="214"/>
        <end position="221"/>
    </location>
</feature>
<feature type="strand" evidence="4">
    <location>
        <begin position="224"/>
        <end position="228"/>
    </location>
</feature>
<feature type="strand" evidence="4">
    <location>
        <begin position="231"/>
        <end position="233"/>
    </location>
</feature>
<feature type="strand" evidence="4">
    <location>
        <begin position="252"/>
        <end position="256"/>
    </location>
</feature>
<feature type="helix" evidence="4">
    <location>
        <begin position="261"/>
        <end position="273"/>
    </location>
</feature>
<feature type="strand" evidence="4">
    <location>
        <begin position="279"/>
        <end position="282"/>
    </location>
</feature>
<feature type="helix" evidence="4">
    <location>
        <begin position="291"/>
        <end position="295"/>
    </location>
</feature>
<feature type="strand" evidence="4">
    <location>
        <begin position="302"/>
        <end position="312"/>
    </location>
</feature>
<feature type="strand" evidence="4">
    <location>
        <begin position="319"/>
        <end position="321"/>
    </location>
</feature>
<feature type="helix" evidence="4">
    <location>
        <begin position="322"/>
        <end position="338"/>
    </location>
</feature>
<name>AMPK_PYRFU</name>
<gene>
    <name type="ordered locus">PF1861</name>
</gene>
<sequence>MVDWELMKKIIESPGVSGYEHLGIRDLVVDILKDVADEVKIDKLGNVIAHFKGSAPKVMVAAHMDKIGLMVNHIDKDGYLRVVPIGGVLPETLIAQKIRFFTEKGERYGVVGVLPPHLRREAKDQGGKIDWDSIIVDVGASSREEAEEMGFRIGTIGEFAPNFTRLSEHRFATPYLDDRICLYAMIEAARQLGEHEADIYIVASVQEEIGLRGARVASFAIDPEVGIAMDVTFAKQPNDKGKIVPELGKGPVMDVGPNINPKLRQFADEVAKKYEIPLQVEPSPRPTGTDANVMQINREGVATAVLSIPIRYMHSQVELADARDVDNTIKLAKALLEELKPMDFTP</sequence>
<proteinExistence type="evidence at protein level"/>
<dbReference type="EC" id="3.4.11.15"/>
<dbReference type="EMBL" id="AE009950">
    <property type="protein sequence ID" value="AAL81985.1"/>
    <property type="molecule type" value="Genomic_DNA"/>
</dbReference>
<dbReference type="RefSeq" id="WP_011013001.1">
    <property type="nucleotide sequence ID" value="NZ_CP023154.1"/>
</dbReference>
<dbReference type="PDB" id="4X8I">
    <property type="method" value="X-ray"/>
    <property type="resolution" value="2.50 A"/>
    <property type="chains" value="A/B/C=1-346"/>
</dbReference>
<dbReference type="PDBsum" id="4X8I"/>
<dbReference type="SMR" id="Q8TZW4"/>
<dbReference type="STRING" id="186497.PF1861"/>
<dbReference type="MEROPS" id="M42.009"/>
<dbReference type="PaxDb" id="186497-PF1861"/>
<dbReference type="KEGG" id="pfu:PF1861"/>
<dbReference type="PATRIC" id="fig|186497.12.peg.1931"/>
<dbReference type="eggNOG" id="arCOG01518">
    <property type="taxonomic scope" value="Archaea"/>
</dbReference>
<dbReference type="HOGENOM" id="CLU_047249_1_0_2"/>
<dbReference type="OrthoDB" id="30642at2157"/>
<dbReference type="PhylomeDB" id="Q8TZW4"/>
<dbReference type="BRENDA" id="3.4.11.15">
    <property type="organism ID" value="5243"/>
</dbReference>
<dbReference type="SABIO-RK" id="Q8TZW4"/>
<dbReference type="EvolutionaryTrace" id="Q8TZW4"/>
<dbReference type="Proteomes" id="UP000001013">
    <property type="component" value="Chromosome"/>
</dbReference>
<dbReference type="GO" id="GO:0004177">
    <property type="term" value="F:aminopeptidase activity"/>
    <property type="evidence" value="ECO:0007669"/>
    <property type="project" value="UniProtKB-KW"/>
</dbReference>
<dbReference type="GO" id="GO:0046872">
    <property type="term" value="F:metal ion binding"/>
    <property type="evidence" value="ECO:0007669"/>
    <property type="project" value="UniProtKB-KW"/>
</dbReference>
<dbReference type="GO" id="GO:0008237">
    <property type="term" value="F:metallopeptidase activity"/>
    <property type="evidence" value="ECO:0007669"/>
    <property type="project" value="UniProtKB-KW"/>
</dbReference>
<dbReference type="GO" id="GO:0006508">
    <property type="term" value="P:proteolysis"/>
    <property type="evidence" value="ECO:0007669"/>
    <property type="project" value="UniProtKB-KW"/>
</dbReference>
<dbReference type="CDD" id="cd05656">
    <property type="entry name" value="M42_Frv"/>
    <property type="match status" value="1"/>
</dbReference>
<dbReference type="Gene3D" id="2.40.30.40">
    <property type="entry name" value="Peptidase M42, domain 2"/>
    <property type="match status" value="1"/>
</dbReference>
<dbReference type="Gene3D" id="3.40.630.10">
    <property type="entry name" value="Zn peptidases"/>
    <property type="match status" value="1"/>
</dbReference>
<dbReference type="InterPro" id="IPR054931">
    <property type="entry name" value="lys_aminopep_Arch"/>
</dbReference>
<dbReference type="InterPro" id="IPR008007">
    <property type="entry name" value="Peptidase_M42"/>
</dbReference>
<dbReference type="InterPro" id="IPR051464">
    <property type="entry name" value="Peptidase_M42_aminopept"/>
</dbReference>
<dbReference type="InterPro" id="IPR023367">
    <property type="entry name" value="Peptidase_M42_dom2"/>
</dbReference>
<dbReference type="NCBIfam" id="NF040822">
    <property type="entry name" value="lys_aminopep_Arch"/>
    <property type="match status" value="1"/>
</dbReference>
<dbReference type="PANTHER" id="PTHR32481">
    <property type="entry name" value="AMINOPEPTIDASE"/>
    <property type="match status" value="1"/>
</dbReference>
<dbReference type="PANTHER" id="PTHR32481:SF0">
    <property type="entry name" value="AMINOPEPTIDASE YPDE-RELATED"/>
    <property type="match status" value="1"/>
</dbReference>
<dbReference type="Pfam" id="PF05343">
    <property type="entry name" value="Peptidase_M42"/>
    <property type="match status" value="1"/>
</dbReference>
<dbReference type="PIRSF" id="PIRSF001123">
    <property type="entry name" value="PepA_GA"/>
    <property type="match status" value="1"/>
</dbReference>
<dbReference type="SUPFAM" id="SSF101821">
    <property type="entry name" value="Aminopeptidase/glucanase lid domain"/>
    <property type="match status" value="1"/>
</dbReference>
<dbReference type="SUPFAM" id="SSF53187">
    <property type="entry name" value="Zn-dependent exopeptidases"/>
    <property type="match status" value="1"/>
</dbReference>
<comment type="function">
    <text>Hydrolyzes di-, tri- and tetrapeptides with a lysine as the N-terminal amino acid and with Gly, Lys, Ala, Phe or Glu in the second position.</text>
</comment>
<comment type="catalytic activity">
    <reaction evidence="2">
        <text>Preferentially, release of N-terminal lysine.</text>
        <dbReference type="EC" id="3.4.11.15"/>
    </reaction>
</comment>
<comment type="cofactor">
    <cofactor evidence="2">
        <name>Zn(2+)</name>
        <dbReference type="ChEBI" id="CHEBI:29105"/>
    </cofactor>
    <text evidence="2">Binds 2 Zn(2+) ions per subunit.</text>
</comment>
<comment type="biophysicochemical properties">
    <kinetics>
        <KM evidence="2">4.6 mM for Lys-pNA</KM>
        <KM evidence="2">1.8 mM for Lys-Gly-Gly</KM>
        <KM evidence="2">1.4 mM for Arg-pNA</KM>
        <Vmax evidence="2">2900.0 umol/min/mg enzyme with Lys-pNA as substrate</Vmax>
        <Vmax evidence="2">2300.0 umol/min/mg enzyme with Lys-Gly-Gly as substrate</Vmax>
        <Vmax evidence="2">1200.0 umol/min/mg enzyme with Arg-pNA as substrate</Vmax>
    </kinetics>
    <phDependence>
        <text evidence="2">Optimum pH is 8.</text>
    </phDependence>
    <temperatureDependence>
        <text evidence="2">Optimum temperature is 100 degrees Celsius.</text>
    </temperatureDependence>
</comment>
<comment type="subunit">
    <text evidence="2">Homotetramer.</text>
</comment>
<comment type="mass spectrometry"/>
<comment type="similarity">
    <text evidence="3">Belongs to the peptidase M42 family.</text>
</comment>
<reference key="1">
    <citation type="journal article" date="1999" name="Genetics">
        <title>Divergence of the hyperthermophilic archaea Pyrococcus furiosus and P. horikoshii inferred from complete genomic sequences.</title>
        <authorList>
            <person name="Maeder D.L."/>
            <person name="Weiss R.B."/>
            <person name="Dunn D.M."/>
            <person name="Cherry J.L."/>
            <person name="Gonzalez J.M."/>
            <person name="DiRuggiero J."/>
            <person name="Robb F.T."/>
        </authorList>
    </citation>
    <scope>NUCLEOTIDE SEQUENCE [LARGE SCALE GENOMIC DNA]</scope>
    <source>
        <strain>ATCC 43587 / DSM 3638 / JCM 8422 / Vc1</strain>
    </source>
</reference>
<reference key="2">
    <citation type="journal article" date="2005" name="J. Bacteriol.">
        <title>Characterization of a novel zinc-containing, lysine-specific aminopeptidase from the hyperthermophilic archaeon Pyrococcus furiosus.</title>
        <authorList>
            <person name="Story S.V."/>
            <person name="Shah C."/>
            <person name="Jenney F.E. Jr."/>
            <person name="Adams M.W."/>
        </authorList>
    </citation>
    <scope>CATALYTIC ACTIVITY</scope>
    <scope>COFACTOR</scope>
    <scope>SUBUNIT</scope>
    <scope>MASS SPECTROMETRY</scope>
    <scope>BIOPHYSICOCHEMICAL PROPERTIES</scope>
</reference>
<keyword id="KW-0002">3D-structure</keyword>
<keyword id="KW-0031">Aminopeptidase</keyword>
<keyword id="KW-0378">Hydrolase</keyword>
<keyword id="KW-0479">Metal-binding</keyword>
<keyword id="KW-0482">Metalloprotease</keyword>
<keyword id="KW-0645">Protease</keyword>
<keyword id="KW-1185">Reference proteome</keyword>
<keyword id="KW-0862">Zinc</keyword>
<accession>Q8TZW4</accession>
<evidence type="ECO:0000250" key="1"/>
<evidence type="ECO:0000269" key="2">
    <source>
    </source>
</evidence>
<evidence type="ECO:0000305" key="3"/>
<evidence type="ECO:0007829" key="4">
    <source>
        <dbReference type="PDB" id="4X8I"/>
    </source>
</evidence>